<sequence>MDLLVDELFADMNADGASPPPPRPAGGPKNTPAAPPLYATGRLSQAQLMPSPPMPVPPAALFNRLLDDLGFSAGPALCTMLDTWNEDLFSALPTNADLYRECKFLSTLPSDVVEWGDAYVPERTQIDIRAHGDVAFPTLPATRDGLGLYYEALSRFFHAELRAREESYRTVLANFCSALYRYLRASVRQLHRQAHMRGRDRDLGEMLRATIADRYYRETARLARVLFLHLYLFLTREILWAAYAEQMMRPDLFDCLCCDLESWRQLAGLFQPFMFVNGALTVRGVPIEARRLRELNHIREHLNLPLVRSAATEEPGAPLTTPPTLHGNQARASGYFMVLIRAKLDSYSSFTTSPSEAVMREHAYSRARTKNNYGSTIEGLLDLPDDDAPEEAGLAAPRLSFLPAGHTRRLSTAPPTDVSLGDELHLDGEDVAMAHADALDDFDLDMLGDGDSPGPGFTPHDSAPYGALDMADFEFEQMFTDALGIDEYGG</sequence>
<evidence type="ECO:0000250" key="1">
    <source>
        <dbReference type="UniProtKB" id="P04486"/>
    </source>
</evidence>
<evidence type="ECO:0000256" key="2">
    <source>
        <dbReference type="SAM" id="MobiDB-lite"/>
    </source>
</evidence>
<evidence type="ECO:0000269" key="3">
    <source>
    </source>
</evidence>
<evidence type="ECO:0000269" key="4">
    <source>
    </source>
</evidence>
<evidence type="ECO:0000269" key="5">
    <source>
    </source>
</evidence>
<evidence type="ECO:0000269" key="6">
    <source>
    </source>
</evidence>
<evidence type="ECO:0000269" key="7">
    <source>
    </source>
</evidence>
<evidence type="ECO:0000269" key="8">
    <source>
    </source>
</evidence>
<evidence type="ECO:0000269" key="9">
    <source>
    </source>
</evidence>
<evidence type="ECO:0000269" key="10">
    <source>
    </source>
</evidence>
<evidence type="ECO:0000305" key="11"/>
<evidence type="ECO:0007829" key="12">
    <source>
        <dbReference type="PDB" id="16VP"/>
    </source>
</evidence>
<evidence type="ECO:0007829" key="13">
    <source>
        <dbReference type="PDB" id="2PHE"/>
    </source>
</evidence>
<feature type="chain" id="PRO_0000115798" description="Tegument protein VP16">
    <location>
        <begin position="1"/>
        <end position="490"/>
    </location>
</feature>
<feature type="region of interest" description="Disordered" evidence="2">
    <location>
        <begin position="12"/>
        <end position="35"/>
    </location>
</feature>
<feature type="region of interest" description="Transcriptional activation">
    <location>
        <begin position="411"/>
        <end position="490"/>
    </location>
</feature>
<feature type="site" description="Critical role in activation">
    <location>
        <position position="442"/>
    </location>
</feature>
<feature type="modified residue" description="Phosphoserine" evidence="7">
    <location>
        <position position="18"/>
    </location>
</feature>
<feature type="modified residue" description="Phosphoserine" evidence="7">
    <location>
        <position position="353"/>
    </location>
</feature>
<feature type="modified residue" description="Phosphoserine" evidence="7">
    <location>
        <position position="411"/>
    </location>
</feature>
<feature type="modified residue" description="Phosphoserine" evidence="7">
    <location>
        <position position="452"/>
    </location>
</feature>
<feature type="sequence variant" description="In strain: Nonneuroinvasive mutant HF10.">
    <original>A</original>
    <variation>S</variation>
    <location>
        <position position="14"/>
    </location>
</feature>
<feature type="sequence variant" description="In strain: Nonneuroinvasive mutant HF10.">
    <original>T</original>
    <variation>A</variation>
    <location>
        <position position="124"/>
    </location>
</feature>
<feature type="sequence variant" description="In strain: 17 syn+.">
    <original>T</original>
    <variation>A</variation>
    <location>
        <position position="235"/>
    </location>
</feature>
<feature type="sequence variant" description="In strain: Nonneuroinvasive mutant HF10.">
    <original>E</original>
    <variation>K</variation>
    <location>
        <position position="390"/>
    </location>
</feature>
<feature type="sequence variant" description="In strain: Nonneuroinvasive mutant HF10.">
    <original>A</original>
    <variation>P</variation>
    <location>
        <position position="413"/>
    </location>
</feature>
<feature type="helix" evidence="12">
    <location>
        <begin position="58"/>
        <end position="69"/>
    </location>
</feature>
<feature type="helix" evidence="12">
    <location>
        <begin position="74"/>
        <end position="83"/>
    </location>
</feature>
<feature type="helix" evidence="12">
    <location>
        <begin position="96"/>
        <end position="99"/>
    </location>
</feature>
<feature type="helix" evidence="12">
    <location>
        <begin position="103"/>
        <end position="105"/>
    </location>
</feature>
<feature type="helix" evidence="12">
    <location>
        <begin position="109"/>
        <end position="118"/>
    </location>
</feature>
<feature type="helix" evidence="12">
    <location>
        <begin position="143"/>
        <end position="145"/>
    </location>
</feature>
<feature type="helix" evidence="12">
    <location>
        <begin position="146"/>
        <end position="196"/>
    </location>
</feature>
<feature type="helix" evidence="12">
    <location>
        <begin position="203"/>
        <end position="247"/>
    </location>
</feature>
<feature type="helix" evidence="12">
    <location>
        <begin position="250"/>
        <end position="253"/>
    </location>
</feature>
<feature type="strand" evidence="12">
    <location>
        <begin position="256"/>
        <end position="261"/>
    </location>
</feature>
<feature type="helix" evidence="12">
    <location>
        <begin position="264"/>
        <end position="267"/>
    </location>
</feature>
<feature type="strand" evidence="12">
    <location>
        <begin position="278"/>
        <end position="282"/>
    </location>
</feature>
<feature type="helix" evidence="12">
    <location>
        <begin position="289"/>
        <end position="301"/>
    </location>
</feature>
<feature type="turn" evidence="12">
    <location>
        <begin position="310"/>
        <end position="312"/>
    </location>
</feature>
<feature type="helix" evidence="12">
    <location>
        <begin position="332"/>
        <end position="344"/>
    </location>
</feature>
<feature type="strand" evidence="12">
    <location>
        <begin position="398"/>
        <end position="401"/>
    </location>
</feature>
<feature type="turn" evidence="13">
    <location>
        <begin position="466"/>
        <end position="469"/>
    </location>
</feature>
<feature type="helix" evidence="13">
    <location>
        <begin position="470"/>
        <end position="473"/>
    </location>
</feature>
<feature type="helix" evidence="13">
    <location>
        <begin position="475"/>
        <end position="479"/>
    </location>
</feature>
<feature type="turn" evidence="13">
    <location>
        <begin position="480"/>
        <end position="482"/>
    </location>
</feature>
<feature type="strand" evidence="13">
    <location>
        <begin position="483"/>
        <end position="485"/>
    </location>
</feature>
<feature type="helix" evidence="13">
    <location>
        <begin position="486"/>
        <end position="488"/>
    </location>
</feature>
<accession>P06492</accession>
<accession>B9VQH6</accession>
<accession>Q09I86</accession>
<gene>
    <name type="ORF">UL48</name>
</gene>
<protein>
    <recommendedName>
        <fullName>Tegument protein VP16</fullName>
    </recommendedName>
    <alternativeName>
        <fullName>Alpha trans-inducing protein</fullName>
    </alternativeName>
    <alternativeName>
        <fullName>Alpha-TIF</fullName>
    </alternativeName>
    <alternativeName>
        <fullName>ICP25</fullName>
    </alternativeName>
    <alternativeName>
        <fullName>Vmw65</fullName>
    </alternativeName>
</protein>
<dbReference type="EMBL" id="X14112">
    <property type="protein sequence ID" value="CAA32298.1"/>
    <property type="molecule type" value="Genomic_DNA"/>
</dbReference>
<dbReference type="EMBL" id="X03141">
    <property type="protein sequence ID" value="CAA26913.1"/>
    <property type="molecule type" value="Genomic_DNA"/>
</dbReference>
<dbReference type="EMBL" id="DQ889502">
    <property type="protein sequence ID" value="ABI63509.1"/>
    <property type="molecule type" value="Genomic_DNA"/>
</dbReference>
<dbReference type="EMBL" id="FJ593289">
    <property type="protein sequence ID" value="ACM62271.1"/>
    <property type="molecule type" value="Genomic_DNA"/>
</dbReference>
<dbReference type="PIR" id="A24118">
    <property type="entry name" value="IXBE17"/>
</dbReference>
<dbReference type="RefSeq" id="YP_009137123.1">
    <property type="nucleotide sequence ID" value="NC_001806.2"/>
</dbReference>
<dbReference type="PDB" id="16VP">
    <property type="method" value="X-ray"/>
    <property type="resolution" value="2.10 A"/>
    <property type="chains" value="A=47-412"/>
</dbReference>
<dbReference type="PDB" id="2PHE">
    <property type="method" value="NMR"/>
    <property type="chains" value="C=465-490"/>
</dbReference>
<dbReference type="PDB" id="2PHG">
    <property type="method" value="NMR"/>
    <property type="chains" value="B=465-490"/>
</dbReference>
<dbReference type="PDBsum" id="16VP"/>
<dbReference type="PDBsum" id="2PHE"/>
<dbReference type="PDBsum" id="2PHG"/>
<dbReference type="BMRB" id="P06492"/>
<dbReference type="SMR" id="P06492"/>
<dbReference type="BioGRID" id="971443">
    <property type="interactions" value="17"/>
</dbReference>
<dbReference type="DIP" id="DIP-41776N"/>
<dbReference type="ELM" id="P06492"/>
<dbReference type="IntAct" id="P06492">
    <property type="interactions" value="9"/>
</dbReference>
<dbReference type="MINT" id="P06492"/>
<dbReference type="BindingDB" id="P06492"/>
<dbReference type="ChEMBL" id="CHEMBL4218"/>
<dbReference type="iPTMnet" id="P06492"/>
<dbReference type="DNASU" id="24271473"/>
<dbReference type="GeneID" id="24271473"/>
<dbReference type="KEGG" id="vg:24271473"/>
<dbReference type="EvolutionaryTrace" id="P06492"/>
<dbReference type="PRO" id="PR:P06492"/>
<dbReference type="Proteomes" id="UP000009294">
    <property type="component" value="Segment"/>
</dbReference>
<dbReference type="Proteomes" id="UP000180652">
    <property type="component" value="Segment"/>
</dbReference>
<dbReference type="GO" id="GO:0030430">
    <property type="term" value="C:host cell cytoplasm"/>
    <property type="evidence" value="ECO:0000314"/>
    <property type="project" value="CAFA"/>
</dbReference>
<dbReference type="GO" id="GO:0044161">
    <property type="term" value="C:host cell cytoplasmic vesicle"/>
    <property type="evidence" value="ECO:0000314"/>
    <property type="project" value="CAFA"/>
</dbReference>
<dbReference type="GO" id="GO:0042025">
    <property type="term" value="C:host cell nucleus"/>
    <property type="evidence" value="ECO:0000314"/>
    <property type="project" value="CAFA"/>
</dbReference>
<dbReference type="GO" id="GO:0044220">
    <property type="term" value="C:host cell perinuclear region of cytoplasm"/>
    <property type="evidence" value="ECO:0000314"/>
    <property type="project" value="CAFA"/>
</dbReference>
<dbReference type="GO" id="GO:0046809">
    <property type="term" value="C:replication compartment"/>
    <property type="evidence" value="ECO:0000314"/>
    <property type="project" value="CAFA"/>
</dbReference>
<dbReference type="GO" id="GO:0005667">
    <property type="term" value="C:transcription regulator complex"/>
    <property type="evidence" value="ECO:0000315"/>
    <property type="project" value="UniProtKB"/>
</dbReference>
<dbReference type="GO" id="GO:0019033">
    <property type="term" value="C:viral tegument"/>
    <property type="evidence" value="ECO:0000314"/>
    <property type="project" value="CAFA"/>
</dbReference>
<dbReference type="GO" id="GO:0001046">
    <property type="term" value="F:core promoter sequence-specific DNA binding"/>
    <property type="evidence" value="ECO:0000315"/>
    <property type="project" value="CAFA"/>
</dbReference>
<dbReference type="GO" id="GO:0003677">
    <property type="term" value="F:DNA binding"/>
    <property type="evidence" value="ECO:0000314"/>
    <property type="project" value="CAFA"/>
</dbReference>
<dbReference type="GO" id="GO:0003700">
    <property type="term" value="F:DNA-binding transcription factor activity"/>
    <property type="evidence" value="ECO:0000315"/>
    <property type="project" value="CAFA"/>
</dbReference>
<dbReference type="GO" id="GO:0140297">
    <property type="term" value="F:DNA-binding transcription factor binding"/>
    <property type="evidence" value="ECO:0000353"/>
    <property type="project" value="CAFA"/>
</dbReference>
<dbReference type="GO" id="GO:0140677">
    <property type="term" value="F:molecular function activator activity"/>
    <property type="evidence" value="ECO:0000353"/>
    <property type="project" value="DisProt"/>
</dbReference>
<dbReference type="GO" id="GO:0000978">
    <property type="term" value="F:RNA polymerase II cis-regulatory region sequence-specific DNA binding"/>
    <property type="evidence" value="ECO:0000314"/>
    <property type="project" value="CAFA"/>
</dbReference>
<dbReference type="GO" id="GO:0039660">
    <property type="term" value="F:structural constituent of virion"/>
    <property type="evidence" value="ECO:0000314"/>
    <property type="project" value="CAFA"/>
</dbReference>
<dbReference type="GO" id="GO:0003713">
    <property type="term" value="F:transcription coactivator activity"/>
    <property type="evidence" value="ECO:0000314"/>
    <property type="project" value="CAFA"/>
</dbReference>
<dbReference type="GO" id="GO:0051701">
    <property type="term" value="P:biological process involved in interaction with host"/>
    <property type="evidence" value="ECO:0000314"/>
    <property type="project" value="CAFA"/>
</dbReference>
<dbReference type="GO" id="GO:0039695">
    <property type="term" value="P:DNA-templated viral transcription"/>
    <property type="evidence" value="ECO:0000314"/>
    <property type="project" value="UniProtKB"/>
</dbReference>
<dbReference type="GO" id="GO:0045893">
    <property type="term" value="P:positive regulation of DNA-templated transcription"/>
    <property type="evidence" value="ECO:0000315"/>
    <property type="project" value="CAFA"/>
</dbReference>
<dbReference type="GO" id="GO:0045944">
    <property type="term" value="P:positive regulation of transcription by RNA polymerase II"/>
    <property type="evidence" value="ECO:0000316"/>
    <property type="project" value="CAFA"/>
</dbReference>
<dbReference type="GO" id="GO:0065003">
    <property type="term" value="P:protein-containing complex assembly"/>
    <property type="evidence" value="ECO:0000314"/>
    <property type="project" value="CAFA"/>
</dbReference>
<dbReference type="GO" id="GO:0046782">
    <property type="term" value="P:regulation of viral transcription"/>
    <property type="evidence" value="ECO:0000315"/>
    <property type="project" value="CAFA"/>
</dbReference>
<dbReference type="DisProt" id="DP01642"/>
<dbReference type="FunFam" id="1.10.1290.10:FF:000001">
    <property type="entry name" value="Tegument protein VP16"/>
    <property type="match status" value="1"/>
</dbReference>
<dbReference type="Gene3D" id="1.10.1290.10">
    <property type="entry name" value="Alpha trans-inducing (Alpha-TIF)"/>
    <property type="match status" value="1"/>
</dbReference>
<dbReference type="IDEAL" id="IID90007"/>
<dbReference type="InterPro" id="IPR003174">
    <property type="entry name" value="Alpha_TIF"/>
</dbReference>
<dbReference type="InterPro" id="IPR036538">
    <property type="entry name" value="Alpha_TIF_sf"/>
</dbReference>
<dbReference type="InterPro" id="IPR021051">
    <property type="entry name" value="HSV_VP16_C"/>
</dbReference>
<dbReference type="Pfam" id="PF02232">
    <property type="entry name" value="Alpha_TIF"/>
    <property type="match status" value="1"/>
</dbReference>
<dbReference type="Pfam" id="PF12149">
    <property type="entry name" value="HSV_VP16_C"/>
    <property type="match status" value="1"/>
</dbReference>
<dbReference type="SMART" id="SM00814">
    <property type="entry name" value="Alpha_TIF"/>
    <property type="match status" value="1"/>
</dbReference>
<dbReference type="SUPFAM" id="SSF56548">
    <property type="entry name" value="Conserved core of transcriptional regulatory protein vp16"/>
    <property type="match status" value="1"/>
</dbReference>
<proteinExistence type="evidence at protein level"/>
<organism>
    <name type="scientific">Human herpesvirus 1 (strain 17)</name>
    <name type="common">HHV-1</name>
    <name type="synonym">Human herpes simplex virus 1</name>
    <dbReference type="NCBI Taxonomy" id="10299"/>
    <lineage>
        <taxon>Viruses</taxon>
        <taxon>Duplodnaviria</taxon>
        <taxon>Heunggongvirae</taxon>
        <taxon>Peploviricota</taxon>
        <taxon>Herviviricetes</taxon>
        <taxon>Herpesvirales</taxon>
        <taxon>Orthoherpesviridae</taxon>
        <taxon>Alphaherpesvirinae</taxon>
        <taxon>Simplexvirus</taxon>
        <taxon>Simplexvirus humanalpha1</taxon>
        <taxon>Human herpesvirus 1</taxon>
    </lineage>
</organism>
<comment type="function">
    <text evidence="3 4 6 8 9">In the early stage of viral replication, acts as a transcriptional activator of immediate-early (IE) gene products (alpha-genes), which is released by invading virions (PubMed:12826401, PubMed:23029222). Recruits P-TEFb to the viral alpha-gene promoters and overcomes transcriptional inhibition by ICP22 to promote transcription of IE genes (PubMed:15654739, PubMed:23029222). VP16-induced complex represents a regulatory switch: when it is on, it promotes IE-gene expression and thus lytic infection, and when it is off, it limits IE-gene transcription favoring latent infection (PubMed:12826401). Acts as a key activator of lytic infection by initiating the lytic program through the assembly of the transcriptional regulatory VP16-induced complex composed of VP16 and two cellular factors, HCFC1 and POU2F1 (PubMed:10398682). This complex recognizes the core motif 'TAATGARAT' in alpha-gene promoters (PubMed:12826401). In the late stage of viral replication, VP16, as a tegument, is involved in viral assembly (PubMed:19279114).</text>
</comment>
<comment type="function">
    <text evidence="11">May play a role in the aggregation of tegument proteins around nucleocapsids during virus morphogenesis.</text>
</comment>
<comment type="subunit">
    <text evidence="3 5 8 9 10">Interacts with tegument protein VP22 (PubMed:19279114). Interacts with gH (via C-terminus) (PubMed:14675620). Interacts with the virion host shutoff protein (vhs) (PubMed:8139019). Interacts with VP11/12. Associates with the VP16-induced complex; binding to host HCFC1 activates VP16 for association with the octamer motif-binding host protein POU2F1, to form a multiprotein-DNA complex responsible for activating transcription of the viral immediate early genes (PubMed:10398682). Interacts with host P-TEFb; this interaction recruits P-TEFb to the viral alpha-gene promoters and overcomes transcriptional inhibition by ICP22 and promotes transcription of IE genes (PubMed:23029222).</text>
</comment>
<comment type="interaction">
    <interactant intactId="EBI-7489933">
        <id>P06492</id>
    </interactant>
    <interactant intactId="EBI-6148417">
        <id>P10225</id>
        <label>UL41</label>
    </interactant>
    <organismsDiffer>false</organismsDiffer>
    <experiments>3</experiments>
</comment>
<comment type="interaction">
    <interactant intactId="EBI-7489933">
        <id>P06492</id>
    </interactant>
    <interactant intactId="EBI-7694458">
        <id>P10230</id>
        <label>UL46</label>
    </interactant>
    <organismsDiffer>false</organismsDiffer>
    <experiments>2</experiments>
</comment>
<comment type="interaction">
    <interactant intactId="EBI-7489933">
        <id>P06492</id>
    </interactant>
    <interactant intactId="EBI-7490002">
        <id>P10233</id>
        <label>UL49</label>
    </interactant>
    <organismsDiffer>false</organismsDiffer>
    <experiments>2</experiments>
</comment>
<comment type="interaction">
    <interactant intactId="EBI-7489933">
        <id>P06492</id>
    </interactant>
    <interactant intactId="EBI-1386292">
        <id>Q7XYY2</id>
        <label>MED25</label>
    </interactant>
    <organismsDiffer>true</organismsDiffer>
    <experiments>2</experiments>
</comment>
<comment type="subcellular location">
    <subcellularLocation>
        <location evidence="1">Virion tegument</location>
    </subcellularLocation>
    <subcellularLocation>
        <location evidence="1">Host nucleus</location>
    </subcellularLocation>
</comment>
<comment type="domain">
    <text>The transcriptional activation region seems to target many proteins of the RNA polymerase II transcription machinery.</text>
</comment>
<comment type="similarity">
    <text evidence="11">Belongs to the herpesviridae tegument protein VP16 protein family.</text>
</comment>
<name>VP16_HHV11</name>
<organismHost>
    <name type="scientific">Homo sapiens</name>
    <name type="common">Human</name>
    <dbReference type="NCBI Taxonomy" id="9606"/>
</organismHost>
<keyword id="KW-0002">3D-structure</keyword>
<keyword id="KW-0238">DNA-binding</keyword>
<keyword id="KW-1048">Host nucleus</keyword>
<keyword id="KW-0945">Host-virus interaction</keyword>
<keyword id="KW-0597">Phosphoprotein</keyword>
<keyword id="KW-1185">Reference proteome</keyword>
<keyword id="KW-0804">Transcription</keyword>
<keyword id="KW-0805">Transcription regulation</keyword>
<keyword id="KW-0946">Virion</keyword>
<keyword id="KW-0920">Virion tegument</keyword>
<reference key="1">
    <citation type="journal article" date="1985" name="Nucleic Acids Res.">
        <title>DNA sequence of the herpes simplex virus type 1 gene whose product is responsible for transcriptional activation of immediate early promoters.</title>
        <authorList>
            <person name="Dalrymple M.A."/>
            <person name="McGeoch D.J."/>
            <person name="Davison A.J."/>
            <person name="Preston C.M."/>
        </authorList>
    </citation>
    <scope>NUCLEOTIDE SEQUENCE [GENOMIC DNA]</scope>
</reference>
<reference key="2">
    <citation type="journal article" date="1988" name="J. Gen. Virol.">
        <title>The complete DNA sequence of the long unique region in the genome of herpes simplex virus type 1.</title>
        <authorList>
            <person name="McGeoch D.J."/>
            <person name="Dalrymple M.A."/>
            <person name="Davison A.J."/>
            <person name="Dolan A."/>
            <person name="Frame M.C."/>
            <person name="McNab D."/>
            <person name="Perry L.J."/>
            <person name="Scott J.E."/>
            <person name="Taylor P."/>
        </authorList>
    </citation>
    <scope>NUCLEOTIDE SEQUENCE [LARGE SCALE GENOMIC DNA]</scope>
</reference>
<reference key="3">
    <citation type="journal article" date="2007" name="Microbes Infect.">
        <title>Determination and analysis of the DNA sequence of highly attenuated herpes simplex virus type 1 mutant HF10, a potential oncolytic virus.</title>
        <authorList>
            <person name="Ushijima Y."/>
            <person name="Luo C."/>
            <person name="Goshima F."/>
            <person name="Yamauchi Y."/>
            <person name="Kimura H."/>
            <person name="Nishiyama Y."/>
        </authorList>
    </citation>
    <scope>NUCLEOTIDE SEQUENCE [LARGE SCALE GENOMIC DNA]</scope>
    <source>
        <strain>Nonneuroinvasive mutant HF10</strain>
    </source>
</reference>
<reference key="4">
    <citation type="submission" date="2008-12" db="EMBL/GenBank/DDBJ databases">
        <title>Herpes simplex virus type 1 bacterial artificial chromosome.</title>
        <authorList>
            <person name="Cunningham C."/>
            <person name="Davison A.J."/>
        </authorList>
    </citation>
    <scope>NUCLEOTIDE SEQUENCE [LARGE SCALE GENOMIC DNA]</scope>
    <source>
        <strain>17 syn+</strain>
    </source>
</reference>
<reference key="5">
    <citation type="journal article" date="1989" name="EMBO J.">
        <title>The C-terminal 79 amino acids of the herpes simplex virus regulatory protein, Vmw65, efficiently activate transcription in yeast and mammalian cells in chimeric DNA-binding proteins.</title>
        <authorList>
            <person name="Cousens D.J."/>
            <person name="Greaves R.F."/>
            <person name="Goding C.R."/>
            <person name="O'Hare P."/>
        </authorList>
    </citation>
    <scope>DNA-BINDING</scope>
</reference>
<reference key="6">
    <citation type="journal article" date="1994" name="J. Virol.">
        <title>Herpes simplex virus VP16 forms a complex with the virion host shutoff protein vhs.</title>
        <authorList>
            <person name="Smibert C.A."/>
            <person name="Popova B."/>
            <person name="Xiao P."/>
            <person name="Capone J.P."/>
            <person name="Smiley J.R."/>
        </authorList>
    </citation>
    <scope>INTERACTION WITH VIRION HOST SHUTOFF PROTEIN</scope>
    <source>
        <strain>KOS</strain>
    </source>
</reference>
<reference key="7">
    <citation type="journal article" date="2003" name="Virology">
        <title>The cytoplasmic tail of Herpes simplex virus glycoprotein H binds to the tegument protein VP16 in vitro and in vivo.</title>
        <authorList>
            <person name="Gross S.T."/>
            <person name="Harley C.A."/>
            <person name="Wilson D.W."/>
        </authorList>
    </citation>
    <scope>INTERACTION WITH GH</scope>
    <source>
        <strain>SC16</strain>
    </source>
</reference>
<reference key="8">
    <citation type="journal article" date="2006" name="Virology">
        <title>Phosphorylation of the VP16 transcriptional activator protein during herpes simplex virus infection and mutational analysis of putative phosphorylation sites.</title>
        <authorList>
            <person name="Ottosen S."/>
            <person name="Herrera F.J."/>
            <person name="Doroghazi J.R."/>
            <person name="Hull A."/>
            <person name="Mittal S."/>
            <person name="Lane W.S."/>
            <person name="Triezenberg S.J."/>
        </authorList>
    </citation>
    <scope>PHOSPHORYLATION AT SER-18; SER-353; SER-411 AND SER-452</scope>
</reference>
<reference key="9">
    <citation type="journal article" date="2009" name="J. Virol.">
        <title>Virion incorporation of the herpes simplex virus type 1 tegument protein VP22 occurs via glycoprotein E-specific recruitment to the late secretory pathway.</title>
        <authorList>
            <person name="Stylianou J."/>
            <person name="Maringer K."/>
            <person name="Cook R."/>
            <person name="Bernard E."/>
            <person name="Elliott G."/>
        </authorList>
    </citation>
    <scope>INTERACTION WITH TEGUMENT PROTEIN VP22</scope>
</reference>
<reference key="10">
    <citation type="journal article" date="2003" name="Trends Biochem. Sci.">
        <title>The herpes simplex virus VP16-induced complex: the makings of a regulatory switch.</title>
        <authorList>
            <person name="Wysocka J."/>
            <person name="Herr W."/>
        </authorList>
    </citation>
    <scope>REVIEW</scope>
    <scope>IDENTIFICATION IN THE VP16-INDUCED COMPLEX</scope>
    <scope>FUNCTION</scope>
</reference>
<reference key="11">
    <citation type="journal article" date="2012" name="PLoS ONE">
        <title>Herpes simplex virus 1 ICP22 inhibits the transcription of viral gene promoters by binding to and blocking the recruitment of P-TEFb.</title>
        <authorList>
            <person name="Guo L."/>
            <person name="Wu W.J."/>
            <person name="Liu L.D."/>
            <person name="Wang L.C."/>
            <person name="Zhang Y."/>
            <person name="Wu L.Q."/>
            <person name="Guan Y."/>
            <person name="Li Q.H."/>
        </authorList>
    </citation>
    <scope>INTERACTION WITH HOST TRANSCRIPTION ELONGATION P-TEFB COMPLEX</scope>
</reference>
<reference key="12">
    <citation type="journal article" date="2020" name="Front. Microbiol.">
        <title>The Role of VP16 in the Life Cycle of Alphaherpesviruses.</title>
        <authorList>
            <person name="Fan D."/>
            <person name="Wang M."/>
            <person name="Cheng A."/>
            <person name="Jia R."/>
            <person name="Yang Q."/>
            <person name="Wu Y."/>
            <person name="Zhu D."/>
            <person name="Zhao X."/>
            <person name="Chen S."/>
            <person name="Liu M."/>
            <person name="Zhang S."/>
            <person name="Ou X."/>
            <person name="Mao S."/>
            <person name="Gao Q."/>
            <person name="Sun D."/>
            <person name="Wen X."/>
            <person name="Liu Y."/>
            <person name="Yu Y."/>
            <person name="Zhang L."/>
            <person name="Tian B."/>
            <person name="Pan L."/>
            <person name="Chen X."/>
        </authorList>
    </citation>
    <scope>REVIEW</scope>
</reference>
<reference key="13">
    <citation type="journal article" date="2021" name="Vaccines (Basel)">
        <title>HSV-1 ICP22 Is a Selective Viral Repressor of Cellular RNA Polymerase II-Mediated Transcription Elongation.</title>
        <authorList>
            <person name="Isa N.F."/>
            <person name="Bensaude O."/>
            <person name="Aziz N.C."/>
            <person name="Murphy S."/>
        </authorList>
    </citation>
    <scope>FUNCTION</scope>
</reference>
<reference key="14">
    <citation type="journal article" date="2005" name="Biochemistry">
        <title>Structural properties of the promiscuous VP16 activation domain.</title>
        <authorList>
            <person name="Jonker H.R."/>
            <person name="Wechselberger R.W."/>
            <person name="Boelens R."/>
            <person name="Folkers G.E."/>
            <person name="Kaptein R."/>
        </authorList>
    </citation>
    <scope>STRUCTURE BY NMR OF 465-490</scope>
</reference>
<reference key="15">
    <citation type="journal article" date="1999" name="Genes Dev.">
        <title>Crystal structure of the conserved core of the herpes simplex virus transcriptional regulatory protein VP16.</title>
        <authorList>
            <person name="Liu Y."/>
            <person name="Gong W."/>
            <person name="Huang C.C."/>
            <person name="Herr W."/>
            <person name="Cheng X."/>
        </authorList>
    </citation>
    <scope>X-RAY CRYSTALLOGRAPHY (2.1 ANGSTROMS) OF 49-412</scope>
    <scope>INTERACTION WITH HUMAN HCFC1 AND HUMAN POU2F1</scope>
    <scope>FUNCTION</scope>
</reference>